<protein>
    <recommendedName>
        <fullName>Outer capsid protein VP2</fullName>
    </recommendedName>
</protein>
<keyword id="KW-0167">Capsid protein</keyword>
<keyword id="KW-1165">Clathrin-mediated endocytosis of virus by host</keyword>
<keyword id="KW-0945">Host-virus interaction</keyword>
<keyword id="KW-1153">Inner capsid protein</keyword>
<keyword id="KW-1161">Viral attachment to host cell</keyword>
<keyword id="KW-1162">Viral penetration into host cytoplasm</keyword>
<keyword id="KW-0946">Virion</keyword>
<keyword id="KW-1164">Virus endocytosis by host</keyword>
<keyword id="KW-1160">Virus entry into host cell</keyword>
<comment type="function">
    <text evidence="1">The VP2 protein is one of the two proteins (with VP5) which constitute the virus particle outer capsid. It is the major target of the host immunogenic response. Responsible for viral attachment to target host cell, probably by binding to sialic acid. This attachment induces virion internalization predominantly through clathrin-dependent endocytosis (By similarity).</text>
</comment>
<comment type="subcellular location">
    <subcellularLocation>
        <location evidence="2">Virion</location>
    </subcellularLocation>
</comment>
<comment type="similarity">
    <text evidence="2">Belongs to the orbivirus VP2 family.</text>
</comment>
<proteinExistence type="inferred from homology"/>
<evidence type="ECO:0000250" key="1"/>
<evidence type="ECO:0000305" key="2"/>
<accession>Q06998</accession>
<sequence length="959" mass="112164">MEELVLPVISRQFDKKLLGRYEYVIELAKPEQDEWTNHDVTQIPGRRMFDVAQQGIRDAMHLKPLENDGEVLPRILDMSIACYDMRKTMMKKEGVDFVSNTRWLEWIIQDSMDVQPLRVHINEDHSTVQYDMFSAKVHIDSRKADTTSYHAIAVETKAERKCCHVRTEVWNSVVRNHLFNTAQESCYTFKQTYELIVNSERLSTEEEFRVGAPQFHTIQRNHRMQLGDNAYDKFLKGLVQLRVSGTTPAKIRDEVAALDVIRDNWIRGSFDRSHIKSLELCRLLSSIGRKMVNMEEEPKDEKDLSVKFQFRLDEKFSPNDPERNVIFTSKTHRTNEDRFYVLLVIAASDTNNGRVWWSNPYPCLRGALIAAECKLGDVYHTLRSKYAWGVRPTYKPKDLEREREKYVVGRVNLFDLEGEPATKVIHWEYELISPTYSVSNHKGNQCDLYPDDVEITTKFNEDRYREMIQSVIDDGWDQKNLKMYKILEEEGNPLLYDLEKDINLDSQSQVVFPSYYNKWTHAPMFNARVKPCDIELAERKNDDPFVKRTLKPIKADCVDLLRYHMSHYYDLRPCVKGVSLSIKQTPSGIHQALVQDDSYSRLLRRRDVDLDYSSPCPIITNYFLLEKFHILILTIMEKHYWELDDSDDVYEFPKIDASAFEVDGTLYDISQTIVHMYDRFFEKRRVLRSIDESRWILHLIRISQGRERLEVIERFFPNYGKAMRQRDFKKVRDVMFLNFLPFFFLTGDNISYEHRQWSIPIILYADKLRILPIEVGAHYNRFGVTCILELLNFFPSYEKREEKLEEDIVLCADAIVNFYLQTTISNGGVQTSIVSTKALLYEMYLSSICGGYSEGVLWYLPITHPVKCLVALEVSDALVGADVRIDKIKRRFPLSAKHLKGIVQISVHPNRTFSVTTCGIVKHKVCKKTLLKHRCDVILLQTPGYVFGNDELLTKLLNI</sequence>
<reference key="1">
    <citation type="journal article" date="1990" name="Virus Res.">
        <title>Relationships amongst bluetongue viruses revealed by comparisons of capsid and outer coat protein nucleotide sequences.</title>
        <authorList>
            <person name="Gould A.R."/>
            <person name="Pritchard L.I."/>
        </authorList>
    </citation>
    <scope>NUCLEOTIDE SEQUENCE [GENOMIC RNA]</scope>
</reference>
<gene>
    <name type="primary">Segment-2</name>
</gene>
<organismHost>
    <name type="scientific">Antilocapra americana</name>
    <name type="common">Pronghorn</name>
    <dbReference type="NCBI Taxonomy" id="9891"/>
</organismHost>
<organismHost>
    <name type="scientific">Bos taurus</name>
    <name type="common">Bovine</name>
    <dbReference type="NCBI Taxonomy" id="9913"/>
</organismHost>
<organismHost>
    <name type="scientific">Capra hircus</name>
    <name type="common">Goat</name>
    <dbReference type="NCBI Taxonomy" id="9925"/>
</organismHost>
<organismHost>
    <name type="scientific">Culicoides variipennis</name>
    <name type="common">Biting midge</name>
    <dbReference type="NCBI Taxonomy" id="46212"/>
</organismHost>
<organismHost>
    <name type="scientific">Ovis aries</name>
    <name type="common">Sheep</name>
    <dbReference type="NCBI Taxonomy" id="9940"/>
</organismHost>
<organism>
    <name type="scientific">Bluetongue virus 3 (isolate South Africa vaccine)</name>
    <name type="common">BTV 3</name>
    <dbReference type="NCBI Taxonomy" id="36424"/>
    <lineage>
        <taxon>Viruses</taxon>
        <taxon>Riboviria</taxon>
        <taxon>Orthornavirae</taxon>
        <taxon>Duplornaviricota</taxon>
        <taxon>Resentoviricetes</taxon>
        <taxon>Reovirales</taxon>
        <taxon>Sedoreoviridae</taxon>
        <taxon>Orbivirus</taxon>
        <taxon>Bluetongue virus</taxon>
    </lineage>
</organism>
<dbReference type="EMBL" id="X55801">
    <property type="protein sequence ID" value="CAA39323.1"/>
    <property type="molecule type" value="Genomic_RNA"/>
</dbReference>
<dbReference type="PIR" id="B60017">
    <property type="entry name" value="B60017"/>
</dbReference>
<dbReference type="SMR" id="Q06998"/>
<dbReference type="GO" id="GO:0039625">
    <property type="term" value="C:viral inner capsid"/>
    <property type="evidence" value="ECO:0007669"/>
    <property type="project" value="UniProtKB-KW"/>
</dbReference>
<dbReference type="GO" id="GO:0005198">
    <property type="term" value="F:structural molecule activity"/>
    <property type="evidence" value="ECO:0007669"/>
    <property type="project" value="InterPro"/>
</dbReference>
<dbReference type="GO" id="GO:0075512">
    <property type="term" value="P:clathrin-dependent endocytosis of virus by host cell"/>
    <property type="evidence" value="ECO:0007669"/>
    <property type="project" value="UniProtKB-KW"/>
</dbReference>
<dbReference type="GO" id="GO:0019062">
    <property type="term" value="P:virion attachment to host cell"/>
    <property type="evidence" value="ECO:0007669"/>
    <property type="project" value="UniProtKB-KW"/>
</dbReference>
<dbReference type="InterPro" id="IPR001742">
    <property type="entry name" value="Capsid_VP2_Orbivir"/>
</dbReference>
<dbReference type="Pfam" id="PF00898">
    <property type="entry name" value="Orbi_VP2"/>
    <property type="match status" value="1"/>
</dbReference>
<name>VP2_BTV3V</name>
<feature type="chain" id="PRO_0000222683" description="Outer capsid protein VP2">
    <location>
        <begin position="1"/>
        <end position="959"/>
    </location>
</feature>